<dbReference type="EMBL" id="EU827807">
    <property type="protein sequence ID" value="ACF08007.1"/>
    <property type="molecule type" value="mRNA"/>
</dbReference>
<dbReference type="GO" id="GO:0005576">
    <property type="term" value="C:extracellular region"/>
    <property type="evidence" value="ECO:0000314"/>
    <property type="project" value="UniProtKB"/>
</dbReference>
<dbReference type="GO" id="GO:0050829">
    <property type="term" value="P:defense response to Gram-negative bacterium"/>
    <property type="evidence" value="ECO:0000314"/>
    <property type="project" value="UniProtKB"/>
</dbReference>
<dbReference type="GO" id="GO:0050830">
    <property type="term" value="P:defense response to Gram-positive bacterium"/>
    <property type="evidence" value="ECO:0000314"/>
    <property type="project" value="UniProtKB"/>
</dbReference>
<dbReference type="InterPro" id="IPR004275">
    <property type="entry name" value="Frog_antimicrobial_propeptide"/>
</dbReference>
<dbReference type="Pfam" id="PF03032">
    <property type="entry name" value="FSAP_sig_propep"/>
    <property type="match status" value="1"/>
</dbReference>
<accession>B5A9S9</accession>
<organism>
    <name type="scientific">Rana dybowskii</name>
    <name type="common">Dybovsky's frog</name>
    <name type="synonym">Korean brown frog</name>
    <dbReference type="NCBI Taxonomy" id="71582"/>
    <lineage>
        <taxon>Eukaryota</taxon>
        <taxon>Metazoa</taxon>
        <taxon>Chordata</taxon>
        <taxon>Craniata</taxon>
        <taxon>Vertebrata</taxon>
        <taxon>Euteleostomi</taxon>
        <taxon>Amphibia</taxon>
        <taxon>Batrachia</taxon>
        <taxon>Anura</taxon>
        <taxon>Neobatrachia</taxon>
        <taxon>Ranoidea</taxon>
        <taxon>Ranidae</taxon>
        <taxon>Rana</taxon>
        <taxon>Rana</taxon>
    </lineage>
</organism>
<feature type="signal peptide" evidence="1 5">
    <location>
        <begin position="1"/>
        <end position="22"/>
    </location>
</feature>
<feature type="propeptide" id="PRO_0000391428" evidence="2">
    <location>
        <begin position="23"/>
        <end position="44"/>
    </location>
</feature>
<feature type="peptide" id="PRO_5000391781" description="Dybowskin-1CDYa" evidence="2">
    <location>
        <begin position="47"/>
        <end position="59"/>
    </location>
</feature>
<sequence>MFTLKKSLLLLFFLGTINFSLCEEERNAEEERRDYPEERDVEVEKRIIPLPLGYFAKKT</sequence>
<evidence type="ECO:0000255" key="1"/>
<evidence type="ECO:0000269" key="2">
    <source>
    </source>
</evidence>
<evidence type="ECO:0000303" key="3">
    <source>
    </source>
</evidence>
<evidence type="ECO:0000305" key="4"/>
<evidence type="ECO:0000312" key="5">
    <source>
        <dbReference type="EMBL" id="ACF08007.1"/>
    </source>
</evidence>
<protein>
    <recommendedName>
        <fullName evidence="3 5">Dybowskin-1CDYa</fullName>
    </recommendedName>
</protein>
<name>D1CYA_RANDY</name>
<keyword id="KW-0878">Amphibian defense peptide</keyword>
<keyword id="KW-0044">Antibiotic</keyword>
<keyword id="KW-0929">Antimicrobial</keyword>
<keyword id="KW-0165">Cleavage on pair of basic residues</keyword>
<keyword id="KW-0903">Direct protein sequencing</keyword>
<keyword id="KW-0964">Secreted</keyword>
<keyword id="KW-0732">Signal</keyword>
<comment type="function">
    <text evidence="2">Antimicrobial peptide. Has activity against the Gram-positive bacterium S.aureus (MIC=6 uM) and the Gram-negative bacterium E.coli (MIC=3 uM). Lacks hemolytic activity against human erythrocytes.</text>
</comment>
<comment type="subcellular location">
    <subcellularLocation>
        <location evidence="2">Secreted</location>
    </subcellularLocation>
</comment>
<comment type="tissue specificity">
    <text evidence="2">Expressed by the skin glands.</text>
</comment>
<comment type="similarity">
    <text evidence="1">Belongs to the frog skin active peptide (FSAP) family. Brevinin subfamily.</text>
</comment>
<proteinExistence type="evidence at protein level"/>
<reference evidence="4 5" key="1">
    <citation type="journal article" date="2009" name="Comp. Biochem. Physiol.">
        <title>Characterization of antimicrobial peptides isolated from the skin of the Chinese frog, Rana dybowskii.</title>
        <authorList>
            <person name="Jin L.-L."/>
            <person name="Li Q."/>
            <person name="Song S.-S."/>
            <person name="Feng K."/>
            <person name="Zhang D.-B."/>
            <person name="Wang Q.-Y."/>
            <person name="Chen Y.-H."/>
        </authorList>
    </citation>
    <scope>NUCLEOTIDE SEQUENCE [MRNA]</scope>
    <scope>PROTEIN SEQUENCE OF 47-59</scope>
    <scope>SUBCELLULAR LOCATION</scope>
    <scope>TISSUE SPECIFICITY</scope>
    <scope>FUNCTION</scope>
    <source>
        <tissue evidence="5">Skin</tissue>
        <tissue evidence="2">Skin secretion</tissue>
    </source>
</reference>